<sequence length="215" mass="23333">MKQELVLRWTFYFAGLIILAFGVSLTIEGKALGISPWDAFHYSLFQHFGLTVGQWSIIIGALIVGFTSLFTRAWPKIGALLNMVLIGVFIDFFNFILPALSTYTGSIIVFSLGVVLIGYGVGVYVSAGLGAGPRDSLMMLITEKTGWNVQWVRNGMELTILFAAWGMGGPIGFGTILTAILTGLILRFSLPQSIQLLNYAVARRTAAVKASPPVH</sequence>
<reference key="1">
    <citation type="journal article" date="1997" name="Nature">
        <title>The complete genome sequence of the Gram-positive bacterium Bacillus subtilis.</title>
        <authorList>
            <person name="Kunst F."/>
            <person name="Ogasawara N."/>
            <person name="Moszer I."/>
            <person name="Albertini A.M."/>
            <person name="Alloni G."/>
            <person name="Azevedo V."/>
            <person name="Bertero M.G."/>
            <person name="Bessieres P."/>
            <person name="Bolotin A."/>
            <person name="Borchert S."/>
            <person name="Borriss R."/>
            <person name="Boursier L."/>
            <person name="Brans A."/>
            <person name="Braun M."/>
            <person name="Brignell S.C."/>
            <person name="Bron S."/>
            <person name="Brouillet S."/>
            <person name="Bruschi C.V."/>
            <person name="Caldwell B."/>
            <person name="Capuano V."/>
            <person name="Carter N.M."/>
            <person name="Choi S.-K."/>
            <person name="Codani J.-J."/>
            <person name="Connerton I.F."/>
            <person name="Cummings N.J."/>
            <person name="Daniel R.A."/>
            <person name="Denizot F."/>
            <person name="Devine K.M."/>
            <person name="Duesterhoeft A."/>
            <person name="Ehrlich S.D."/>
            <person name="Emmerson P.T."/>
            <person name="Entian K.-D."/>
            <person name="Errington J."/>
            <person name="Fabret C."/>
            <person name="Ferrari E."/>
            <person name="Foulger D."/>
            <person name="Fritz C."/>
            <person name="Fujita M."/>
            <person name="Fujita Y."/>
            <person name="Fuma S."/>
            <person name="Galizzi A."/>
            <person name="Galleron N."/>
            <person name="Ghim S.-Y."/>
            <person name="Glaser P."/>
            <person name="Goffeau A."/>
            <person name="Golightly E.J."/>
            <person name="Grandi G."/>
            <person name="Guiseppi G."/>
            <person name="Guy B.J."/>
            <person name="Haga K."/>
            <person name="Haiech J."/>
            <person name="Harwood C.R."/>
            <person name="Henaut A."/>
            <person name="Hilbert H."/>
            <person name="Holsappel S."/>
            <person name="Hosono S."/>
            <person name="Hullo M.-F."/>
            <person name="Itaya M."/>
            <person name="Jones L.-M."/>
            <person name="Joris B."/>
            <person name="Karamata D."/>
            <person name="Kasahara Y."/>
            <person name="Klaerr-Blanchard M."/>
            <person name="Klein C."/>
            <person name="Kobayashi Y."/>
            <person name="Koetter P."/>
            <person name="Koningstein G."/>
            <person name="Krogh S."/>
            <person name="Kumano M."/>
            <person name="Kurita K."/>
            <person name="Lapidus A."/>
            <person name="Lardinois S."/>
            <person name="Lauber J."/>
            <person name="Lazarevic V."/>
            <person name="Lee S.-M."/>
            <person name="Levine A."/>
            <person name="Liu H."/>
            <person name="Masuda S."/>
            <person name="Mauel C."/>
            <person name="Medigue C."/>
            <person name="Medina N."/>
            <person name="Mellado R.P."/>
            <person name="Mizuno M."/>
            <person name="Moestl D."/>
            <person name="Nakai S."/>
            <person name="Noback M."/>
            <person name="Noone D."/>
            <person name="O'Reilly M."/>
            <person name="Ogawa K."/>
            <person name="Ogiwara A."/>
            <person name="Oudega B."/>
            <person name="Park S.-H."/>
            <person name="Parro V."/>
            <person name="Pohl T.M."/>
            <person name="Portetelle D."/>
            <person name="Porwollik S."/>
            <person name="Prescott A.M."/>
            <person name="Presecan E."/>
            <person name="Pujic P."/>
            <person name="Purnelle B."/>
            <person name="Rapoport G."/>
            <person name="Rey M."/>
            <person name="Reynolds S."/>
            <person name="Rieger M."/>
            <person name="Rivolta C."/>
            <person name="Rocha E."/>
            <person name="Roche B."/>
            <person name="Rose M."/>
            <person name="Sadaie Y."/>
            <person name="Sato T."/>
            <person name="Scanlan E."/>
            <person name="Schleich S."/>
            <person name="Schroeter R."/>
            <person name="Scoffone F."/>
            <person name="Sekiguchi J."/>
            <person name="Sekowska A."/>
            <person name="Seror S.J."/>
            <person name="Serror P."/>
            <person name="Shin B.-S."/>
            <person name="Soldo B."/>
            <person name="Sorokin A."/>
            <person name="Tacconi E."/>
            <person name="Takagi T."/>
            <person name="Takahashi H."/>
            <person name="Takemaru K."/>
            <person name="Takeuchi M."/>
            <person name="Tamakoshi A."/>
            <person name="Tanaka T."/>
            <person name="Terpstra P."/>
            <person name="Tognoni A."/>
            <person name="Tosato V."/>
            <person name="Uchiyama S."/>
            <person name="Vandenbol M."/>
            <person name="Vannier F."/>
            <person name="Vassarotti A."/>
            <person name="Viari A."/>
            <person name="Wambutt R."/>
            <person name="Wedler E."/>
            <person name="Wedler H."/>
            <person name="Weitzenegger T."/>
            <person name="Winters P."/>
            <person name="Wipat A."/>
            <person name="Yamamoto H."/>
            <person name="Yamane K."/>
            <person name="Yasumoto K."/>
            <person name="Yata K."/>
            <person name="Yoshida K."/>
            <person name="Yoshikawa H.-F."/>
            <person name="Zumstein E."/>
            <person name="Yoshikawa H."/>
            <person name="Danchin A."/>
        </authorList>
    </citation>
    <scope>NUCLEOTIDE SEQUENCE [LARGE SCALE GENOMIC DNA]</scope>
    <source>
        <strain>168</strain>
    </source>
</reference>
<reference key="2">
    <citation type="journal article" date="2009" name="Microbiology">
        <title>From a consortium sequence to a unified sequence: the Bacillus subtilis 168 reference genome a decade later.</title>
        <authorList>
            <person name="Barbe V."/>
            <person name="Cruveiller S."/>
            <person name="Kunst F."/>
            <person name="Lenoble P."/>
            <person name="Meurice G."/>
            <person name="Sekowska A."/>
            <person name="Vallenet D."/>
            <person name="Wang T."/>
            <person name="Moszer I."/>
            <person name="Medigue C."/>
            <person name="Danchin A."/>
        </authorList>
    </citation>
    <scope>SEQUENCE REVISION TO 100 AND 158</scope>
</reference>
<dbReference type="EMBL" id="AL009126">
    <property type="protein sequence ID" value="CAB12152.2"/>
    <property type="molecule type" value="Genomic_DNA"/>
</dbReference>
<dbReference type="RefSeq" id="NP_388240.2">
    <property type="nucleotide sequence ID" value="NC_000964.3"/>
</dbReference>
<dbReference type="RefSeq" id="WP_003246558.1">
    <property type="nucleotide sequence ID" value="NZ_OZ025638.1"/>
</dbReference>
<dbReference type="FunCoup" id="O34927">
    <property type="interactions" value="268"/>
</dbReference>
<dbReference type="STRING" id="224308.BSU03580"/>
<dbReference type="PaxDb" id="224308-BSU03580"/>
<dbReference type="EnsemblBacteria" id="CAB12152">
    <property type="protein sequence ID" value="CAB12152"/>
    <property type="gene ID" value="BSU_03580"/>
</dbReference>
<dbReference type="GeneID" id="938302"/>
<dbReference type="KEGG" id="bsu:BSU03580"/>
<dbReference type="PATRIC" id="fig|224308.179.peg.376"/>
<dbReference type="eggNOG" id="COG2364">
    <property type="taxonomic scope" value="Bacteria"/>
</dbReference>
<dbReference type="InParanoid" id="O34927"/>
<dbReference type="OrthoDB" id="154912at2"/>
<dbReference type="PhylomeDB" id="O34927"/>
<dbReference type="BioCyc" id="BSUB:BSU03580-MONOMER"/>
<dbReference type="Proteomes" id="UP000001570">
    <property type="component" value="Chromosome"/>
</dbReference>
<dbReference type="GO" id="GO:0005886">
    <property type="term" value="C:plasma membrane"/>
    <property type="evidence" value="ECO:0007669"/>
    <property type="project" value="UniProtKB-SubCell"/>
</dbReference>
<dbReference type="InterPro" id="IPR038750">
    <property type="entry name" value="YczE/YyaS-like"/>
</dbReference>
<dbReference type="PANTHER" id="PTHR40078:SF1">
    <property type="entry name" value="INTEGRAL MEMBRANE PROTEIN"/>
    <property type="match status" value="1"/>
</dbReference>
<dbReference type="PANTHER" id="PTHR40078">
    <property type="entry name" value="INTEGRAL MEMBRANE PROTEIN-RELATED"/>
    <property type="match status" value="1"/>
</dbReference>
<protein>
    <recommendedName>
        <fullName>Uncharacterized membrane protein YczE</fullName>
    </recommendedName>
</protein>
<evidence type="ECO:0000255" key="1"/>
<evidence type="ECO:0000305" key="2"/>
<accession>O34927</accession>
<proteinExistence type="predicted"/>
<gene>
    <name type="primary">yczE</name>
    <name type="ordered locus">BSU03580</name>
</gene>
<organism>
    <name type="scientific">Bacillus subtilis (strain 168)</name>
    <dbReference type="NCBI Taxonomy" id="224308"/>
    <lineage>
        <taxon>Bacteria</taxon>
        <taxon>Bacillati</taxon>
        <taxon>Bacillota</taxon>
        <taxon>Bacilli</taxon>
        <taxon>Bacillales</taxon>
        <taxon>Bacillaceae</taxon>
        <taxon>Bacillus</taxon>
    </lineage>
</organism>
<comment type="subcellular location">
    <subcellularLocation>
        <location evidence="2">Cell membrane</location>
        <topology evidence="2">Multi-pass membrane protein</topology>
    </subcellularLocation>
</comment>
<keyword id="KW-1003">Cell membrane</keyword>
<keyword id="KW-0472">Membrane</keyword>
<keyword id="KW-1185">Reference proteome</keyword>
<keyword id="KW-0812">Transmembrane</keyword>
<keyword id="KW-1133">Transmembrane helix</keyword>
<name>YCZE_BACSU</name>
<feature type="chain" id="PRO_0000387460" description="Uncharacterized membrane protein YczE">
    <location>
        <begin position="1"/>
        <end position="215"/>
    </location>
</feature>
<feature type="transmembrane region" description="Helical" evidence="1">
    <location>
        <begin position="9"/>
        <end position="29"/>
    </location>
</feature>
<feature type="transmembrane region" description="Helical" evidence="1">
    <location>
        <begin position="50"/>
        <end position="70"/>
    </location>
</feature>
<feature type="transmembrane region" description="Helical" evidence="1">
    <location>
        <begin position="77"/>
        <end position="97"/>
    </location>
</feature>
<feature type="transmembrane region" description="Helical" evidence="1">
    <location>
        <begin position="107"/>
        <end position="127"/>
    </location>
</feature>
<feature type="transmembrane region" description="Helical" evidence="1">
    <location>
        <begin position="160"/>
        <end position="180"/>
    </location>
</feature>